<evidence type="ECO:0000269" key="1">
    <source>
    </source>
</evidence>
<evidence type="ECO:0000303" key="2">
    <source>
    </source>
</evidence>
<evidence type="ECO:0000305" key="3"/>
<name>SCBM1_MEGVE</name>
<accession>P86101</accession>
<sequence length="94" mass="10291">TTEEVPLNPEPRTECDSDNCAAGERPYAPNIAIENGDTIIAIGVVADVMFVIDXNCPLYCNFCIVADVMFVIDLVYEVGSFEALQQAIDNIMFT</sequence>
<dbReference type="EC" id="3.1.1.-"/>
<dbReference type="GO" id="GO:0016788">
    <property type="term" value="F:hydrolase activity, acting on ester bonds"/>
    <property type="evidence" value="ECO:0000314"/>
    <property type="project" value="UniProtKB"/>
</dbReference>
<dbReference type="GO" id="GO:0009407">
    <property type="term" value="P:toxin catabolic process"/>
    <property type="evidence" value="ECO:0000314"/>
    <property type="project" value="UniProtKB"/>
</dbReference>
<keyword id="KW-0903">Direct protein sequencing</keyword>
<keyword id="KW-0378">Hydrolase</keyword>
<feature type="chain" id="PRO_0000355082" description="Sulfocarbamoylase-1">
    <location>
        <begin position="1" status="less than"/>
        <end position="94" status="greater than"/>
    </location>
</feature>
<feature type="unsure residue" description="T or C" evidence="1">
    <location>
        <position position="2"/>
    </location>
</feature>
<feature type="unsure residue" description="E or C" evidence="1">
    <location>
        <position position="3"/>
    </location>
</feature>
<feature type="unsure residue" description="R or K" evidence="1">
    <location>
        <position position="12"/>
    </location>
</feature>
<feature type="unsure residue" description="T or C" evidence="1">
    <location>
        <position position="13"/>
    </location>
</feature>
<feature type="unsure residue" description="E or C" evidence="1">
    <location>
        <position position="14"/>
    </location>
</feature>
<feature type="non-consecutive residues" evidence="2">
    <location>
        <begin position="11"/>
        <end position="12"/>
    </location>
</feature>
<feature type="non-consecutive residues" evidence="2">
    <location>
        <begin position="22"/>
        <end position="23"/>
    </location>
</feature>
<feature type="non-consecutive residues" evidence="2">
    <location>
        <begin position="33"/>
        <end position="34"/>
    </location>
</feature>
<feature type="non-consecutive residues" evidence="2">
    <location>
        <begin position="44"/>
        <end position="45"/>
    </location>
</feature>
<feature type="non-consecutive residues" evidence="2">
    <location>
        <begin position="53"/>
        <end position="54"/>
    </location>
</feature>
<feature type="non-consecutive residues" evidence="2">
    <location>
        <begin position="64"/>
        <end position="65"/>
    </location>
</feature>
<feature type="non-consecutive residues" evidence="2">
    <location>
        <begin position="73"/>
        <end position="74"/>
    </location>
</feature>
<feature type="non-consecutive residues" evidence="2">
    <location>
        <begin position="85"/>
        <end position="86"/>
    </location>
</feature>
<feature type="non-terminal residue" evidence="2">
    <location>
        <position position="1"/>
    </location>
</feature>
<feature type="non-terminal residue" evidence="2">
    <location>
        <position position="94"/>
    </location>
</feature>
<protein>
    <recommendedName>
        <fullName evidence="2">Sulfocarbamoylase-1</fullName>
        <ecNumber>3.1.1.-</ecNumber>
    </recommendedName>
    <alternativeName>
        <fullName evidence="2">Sulfocarbamoylase I</fullName>
    </alternativeName>
</protein>
<reference evidence="3" key="1">
    <citation type="journal article" date="2008" name="Biochim. Biophys. Acta">
        <title>Purification and characterization of paralytic shellfish toxin-transforming enzyme, sulfocarbamoylase I, from the Japanese bivalve Peronidia venulosa.</title>
        <authorList>
            <person name="Cho Y."/>
            <person name="Ogawa N."/>
            <person name="Takahashi M."/>
            <person name="Lin H.-P."/>
            <person name="Oshima Y."/>
        </authorList>
    </citation>
    <scope>PROTEIN SEQUENCE</scope>
    <scope>FUNCTION</scope>
    <scope>ACTIVITY REGULATION</scope>
    <scope>BIOPHYSICOCHEMICAL PROPERTIES</scope>
    <scope>SUBUNIT</scope>
    <scope>TISSUE SPECIFICITY</scope>
    <source>
        <tissue evidence="1">Crystalline style</tissue>
    </source>
</reference>
<organism>
    <name type="scientific">Megangulus venulosus</name>
    <name type="common">Japanese bivalve</name>
    <name type="synonym">Tellina venulosa</name>
    <dbReference type="NCBI Taxonomy" id="2602932"/>
    <lineage>
        <taxon>Eukaryota</taxon>
        <taxon>Metazoa</taxon>
        <taxon>Spiralia</taxon>
        <taxon>Lophotrochozoa</taxon>
        <taxon>Mollusca</taxon>
        <taxon>Bivalvia</taxon>
        <taxon>Autobranchia</taxon>
        <taxon>Heteroconchia</taxon>
        <taxon>Euheterodonta</taxon>
        <taxon>Imparidentia</taxon>
        <taxon>Neoheterodontei</taxon>
        <taxon>Cardiida</taxon>
        <taxon>Tellinoidea</taxon>
        <taxon>Tellinidae</taxon>
        <taxon>Megangulus</taxon>
    </lineage>
</organism>
<proteinExistence type="evidence at protein level"/>
<comment type="function">
    <text evidence="1">Hydrolysis of sulfocarbamoyl esters of paralytic shellfish toxins. Does not hydrolyze the carbamoyl esters of paralytic shellfish toxins. Ester hydrolysis is significantly affected by the stereochemistry of sulfate esters at C-11 of the substrate toxin.</text>
</comment>
<comment type="activity regulation">
    <text evidence="1">Strongly inhibited by the serine proteinase inhibitor AEBSF. Weakly inhibited by the proteinase inhibitors BSF and aprotinin, and by EDTA. Not inhibited by the proteinase inhibitors bestatin, E-64 and leupeptin.</text>
</comment>
<comment type="biophysicochemical properties">
    <phDependence>
        <text evidence="1">Optimum pH is 7.0. Activity decreases sharply with increasing acidity or alkalinity.</text>
    </phDependence>
    <temperatureDependence>
        <text evidence="1">Optimum temperature is 25 degrees Celsius and activity decreases sharply above 35 degrees Celsius.</text>
    </temperatureDependence>
</comment>
<comment type="subunit">
    <text evidence="1">Homodimer.</text>
</comment>
<comment type="tissue specificity">
    <text evidence="1">Ubiquitous (at protein level). Highest levels of expression in crystalline style followed by digestive gland and mantle.</text>
</comment>